<reference key="1">
    <citation type="journal article" date="2008" name="Genomics">
        <title>Evolution in the laboratory: the genome of Halobacterium salinarum strain R1 compared to that of strain NRC-1.</title>
        <authorList>
            <person name="Pfeiffer F."/>
            <person name="Schuster S.C."/>
            <person name="Broicher A."/>
            <person name="Falb M."/>
            <person name="Palm P."/>
            <person name="Rodewald K."/>
            <person name="Ruepp A."/>
            <person name="Soppa J."/>
            <person name="Tittor J."/>
            <person name="Oesterhelt D."/>
        </authorList>
    </citation>
    <scope>NUCLEOTIDE SEQUENCE [LARGE SCALE GENOMIC DNA]</scope>
    <source>
        <strain>ATCC 29341 / DSM 671 / R1</strain>
    </source>
</reference>
<protein>
    <recommendedName>
        <fullName evidence="1">Glycerol kinase</fullName>
        <ecNumber evidence="1">2.7.1.30</ecNumber>
    </recommendedName>
    <alternativeName>
        <fullName evidence="1">ATP:glycerol 3-phosphotransferase</fullName>
    </alternativeName>
    <alternativeName>
        <fullName evidence="1">Glycerokinase</fullName>
        <shortName evidence="1">GK</shortName>
    </alternativeName>
</protein>
<organism>
    <name type="scientific">Halobacterium salinarum (strain ATCC 29341 / DSM 671 / R1)</name>
    <dbReference type="NCBI Taxonomy" id="478009"/>
    <lineage>
        <taxon>Archaea</taxon>
        <taxon>Methanobacteriati</taxon>
        <taxon>Methanobacteriota</taxon>
        <taxon>Stenosarchaea group</taxon>
        <taxon>Halobacteria</taxon>
        <taxon>Halobacteriales</taxon>
        <taxon>Halobacteriaceae</taxon>
        <taxon>Halobacterium</taxon>
        <taxon>Halobacterium salinarum NRC-34001</taxon>
    </lineage>
</organism>
<proteinExistence type="inferred from homology"/>
<gene>
    <name evidence="1" type="primary">glpK</name>
    <name type="ordered locus">OE_3762R</name>
</gene>
<sequence length="510" mass="55769">MTDAYVGAIDQGTTGTRFIVFDQHGDVVANTYEKHEQHYPEPGWVEHDPLEIWENTKSVVTAGLSAAGLDADDLAAIGITNQRETTVVWDAASGRPIHNALVWQDRRTTSRVESLEENGKIERIREKTGLEADAYFSATKTEWLLDEAEPLKLSSARASSLRDRARDGELLMGTIDSWLIYNLTGEHITDVSNASRTMLYNITDLEWDDWLLEEFDIPREMLPEVRPSSDEAVYGHTDPDGFLGAAVPVTAALGDQQAALFGQTCFDAGDAKNTYGTGSFYLMNTGEDAVSSEHGLLTTIGFQLSGEPVQYALEGSIFVTGAAIEWLEDVDLINNAAQTAELASSVDTTDGVYMVPAFTGLGAPHWDGRARGTLVGMTRGTRKAHIVRATLESIAYQTRDIAAAMEADSGVSTTTLRVDGGAVKNNFLCQLQSDIIQTDLARPEVDETTALGAAYAAGLAVGYWDSLDDLRENWRVDRSFEPEMDPSEADSKYGRWEDAVDRSLAWATED</sequence>
<accession>B0R6S2</accession>
<keyword id="KW-0067">ATP-binding</keyword>
<keyword id="KW-0319">Glycerol metabolism</keyword>
<keyword id="KW-0418">Kinase</keyword>
<keyword id="KW-0547">Nucleotide-binding</keyword>
<keyword id="KW-0808">Transferase</keyword>
<comment type="function">
    <text evidence="1">Key enzyme in the regulation of glycerol uptake and metabolism. Catalyzes the phosphorylation of glycerol to yield sn-glycerol 3-phosphate.</text>
</comment>
<comment type="catalytic activity">
    <reaction evidence="1">
        <text>glycerol + ATP = sn-glycerol 3-phosphate + ADP + H(+)</text>
        <dbReference type="Rhea" id="RHEA:21644"/>
        <dbReference type="ChEBI" id="CHEBI:15378"/>
        <dbReference type="ChEBI" id="CHEBI:17754"/>
        <dbReference type="ChEBI" id="CHEBI:30616"/>
        <dbReference type="ChEBI" id="CHEBI:57597"/>
        <dbReference type="ChEBI" id="CHEBI:456216"/>
        <dbReference type="EC" id="2.7.1.30"/>
    </reaction>
</comment>
<comment type="pathway">
    <text evidence="1">Polyol metabolism; glycerol degradation via glycerol kinase pathway; sn-glycerol 3-phosphate from glycerol: step 1/1.</text>
</comment>
<comment type="similarity">
    <text evidence="1">Belongs to the FGGY kinase family.</text>
</comment>
<feature type="chain" id="PRO_1000098736" description="Glycerol kinase">
    <location>
        <begin position="1"/>
        <end position="510"/>
    </location>
</feature>
<feature type="binding site" evidence="1">
    <location>
        <position position="13"/>
    </location>
    <ligand>
        <name>ADP</name>
        <dbReference type="ChEBI" id="CHEBI:456216"/>
    </ligand>
</feature>
<feature type="binding site" evidence="1">
    <location>
        <position position="13"/>
    </location>
    <ligand>
        <name>ATP</name>
        <dbReference type="ChEBI" id="CHEBI:30616"/>
    </ligand>
</feature>
<feature type="binding site" evidence="1">
    <location>
        <position position="13"/>
    </location>
    <ligand>
        <name>sn-glycerol 3-phosphate</name>
        <dbReference type="ChEBI" id="CHEBI:57597"/>
    </ligand>
</feature>
<feature type="binding site" evidence="1">
    <location>
        <position position="14"/>
    </location>
    <ligand>
        <name>ATP</name>
        <dbReference type="ChEBI" id="CHEBI:30616"/>
    </ligand>
</feature>
<feature type="binding site" evidence="1">
    <location>
        <position position="17"/>
    </location>
    <ligand>
        <name>ADP</name>
        <dbReference type="ChEBI" id="CHEBI:456216"/>
    </ligand>
</feature>
<feature type="binding site" evidence="1">
    <location>
        <position position="83"/>
    </location>
    <ligand>
        <name>glycerol</name>
        <dbReference type="ChEBI" id="CHEBI:17754"/>
    </ligand>
</feature>
<feature type="binding site" evidence="1">
    <location>
        <position position="83"/>
    </location>
    <ligand>
        <name>sn-glycerol 3-phosphate</name>
        <dbReference type="ChEBI" id="CHEBI:57597"/>
    </ligand>
</feature>
<feature type="binding site" evidence="1">
    <location>
        <position position="84"/>
    </location>
    <ligand>
        <name>glycerol</name>
        <dbReference type="ChEBI" id="CHEBI:17754"/>
    </ligand>
</feature>
<feature type="binding site" evidence="1">
    <location>
        <position position="84"/>
    </location>
    <ligand>
        <name>sn-glycerol 3-phosphate</name>
        <dbReference type="ChEBI" id="CHEBI:57597"/>
    </ligand>
</feature>
<feature type="binding site" evidence="1">
    <location>
        <position position="135"/>
    </location>
    <ligand>
        <name>glycerol</name>
        <dbReference type="ChEBI" id="CHEBI:17754"/>
    </ligand>
</feature>
<feature type="binding site" evidence="1">
    <location>
        <position position="135"/>
    </location>
    <ligand>
        <name>sn-glycerol 3-phosphate</name>
        <dbReference type="ChEBI" id="CHEBI:57597"/>
    </ligand>
</feature>
<feature type="binding site" evidence="1">
    <location>
        <position position="255"/>
    </location>
    <ligand>
        <name>glycerol</name>
        <dbReference type="ChEBI" id="CHEBI:17754"/>
    </ligand>
</feature>
<feature type="binding site" evidence="1">
    <location>
        <position position="255"/>
    </location>
    <ligand>
        <name>sn-glycerol 3-phosphate</name>
        <dbReference type="ChEBI" id="CHEBI:57597"/>
    </ligand>
</feature>
<feature type="binding site" evidence="1">
    <location>
        <position position="256"/>
    </location>
    <ligand>
        <name>glycerol</name>
        <dbReference type="ChEBI" id="CHEBI:17754"/>
    </ligand>
</feature>
<feature type="binding site" evidence="1">
    <location>
        <position position="277"/>
    </location>
    <ligand>
        <name>ADP</name>
        <dbReference type="ChEBI" id="CHEBI:456216"/>
    </ligand>
</feature>
<feature type="binding site" evidence="1">
    <location>
        <position position="277"/>
    </location>
    <ligand>
        <name>ATP</name>
        <dbReference type="ChEBI" id="CHEBI:30616"/>
    </ligand>
</feature>
<feature type="binding site" evidence="1">
    <location>
        <position position="321"/>
    </location>
    <ligand>
        <name>ADP</name>
        <dbReference type="ChEBI" id="CHEBI:456216"/>
    </ligand>
</feature>
<feature type="binding site" evidence="1">
    <location>
        <position position="321"/>
    </location>
    <ligand>
        <name>ATP</name>
        <dbReference type="ChEBI" id="CHEBI:30616"/>
    </ligand>
</feature>
<feature type="binding site" evidence="1">
    <location>
        <position position="421"/>
    </location>
    <ligand>
        <name>ADP</name>
        <dbReference type="ChEBI" id="CHEBI:456216"/>
    </ligand>
</feature>
<feature type="binding site" evidence="1">
    <location>
        <position position="421"/>
    </location>
    <ligand>
        <name>ATP</name>
        <dbReference type="ChEBI" id="CHEBI:30616"/>
    </ligand>
</feature>
<feature type="binding site" evidence="1">
    <location>
        <position position="425"/>
    </location>
    <ligand>
        <name>ADP</name>
        <dbReference type="ChEBI" id="CHEBI:456216"/>
    </ligand>
</feature>
<evidence type="ECO:0000255" key="1">
    <source>
        <dbReference type="HAMAP-Rule" id="MF_00186"/>
    </source>
</evidence>
<name>GLPK_HALS3</name>
<dbReference type="EC" id="2.7.1.30" evidence="1"/>
<dbReference type="EMBL" id="AM774415">
    <property type="protein sequence ID" value="CAP14441.1"/>
    <property type="molecule type" value="Genomic_DNA"/>
</dbReference>
<dbReference type="RefSeq" id="WP_010903446.1">
    <property type="nucleotide sequence ID" value="NC_010364.1"/>
</dbReference>
<dbReference type="SMR" id="B0R6S2"/>
<dbReference type="EnsemblBacteria" id="CAP14441">
    <property type="protein sequence ID" value="CAP14441"/>
    <property type="gene ID" value="OE_3762R"/>
</dbReference>
<dbReference type="GeneID" id="68694569"/>
<dbReference type="KEGG" id="hsl:OE_3762R"/>
<dbReference type="HOGENOM" id="CLU_009281_2_3_2"/>
<dbReference type="PhylomeDB" id="B0R6S2"/>
<dbReference type="UniPathway" id="UPA00618">
    <property type="reaction ID" value="UER00672"/>
</dbReference>
<dbReference type="Proteomes" id="UP000001321">
    <property type="component" value="Chromosome"/>
</dbReference>
<dbReference type="GO" id="GO:0005829">
    <property type="term" value="C:cytosol"/>
    <property type="evidence" value="ECO:0007669"/>
    <property type="project" value="TreeGrafter"/>
</dbReference>
<dbReference type="GO" id="GO:0005524">
    <property type="term" value="F:ATP binding"/>
    <property type="evidence" value="ECO:0007669"/>
    <property type="project" value="UniProtKB-UniRule"/>
</dbReference>
<dbReference type="GO" id="GO:0004370">
    <property type="term" value="F:glycerol kinase activity"/>
    <property type="evidence" value="ECO:0000250"/>
    <property type="project" value="UniProtKB"/>
</dbReference>
<dbReference type="GO" id="GO:0019563">
    <property type="term" value="P:glycerol catabolic process"/>
    <property type="evidence" value="ECO:0007669"/>
    <property type="project" value="UniProtKB-UniRule"/>
</dbReference>
<dbReference type="GO" id="GO:0006071">
    <property type="term" value="P:glycerol metabolic process"/>
    <property type="evidence" value="ECO:0000250"/>
    <property type="project" value="UniProtKB"/>
</dbReference>
<dbReference type="GO" id="GO:0006072">
    <property type="term" value="P:glycerol-3-phosphate metabolic process"/>
    <property type="evidence" value="ECO:0007669"/>
    <property type="project" value="InterPro"/>
</dbReference>
<dbReference type="CDD" id="cd07769">
    <property type="entry name" value="ASKHA_NBD_FGGY_GK"/>
    <property type="match status" value="1"/>
</dbReference>
<dbReference type="FunFam" id="3.30.420.40:FF:000007">
    <property type="entry name" value="Glycerol kinase"/>
    <property type="match status" value="1"/>
</dbReference>
<dbReference type="FunFam" id="3.30.420.40:FF:000008">
    <property type="entry name" value="Glycerol kinase"/>
    <property type="match status" value="1"/>
</dbReference>
<dbReference type="Gene3D" id="3.30.420.40">
    <property type="match status" value="2"/>
</dbReference>
<dbReference type="HAMAP" id="MF_00186">
    <property type="entry name" value="Glycerol_kin"/>
    <property type="match status" value="1"/>
</dbReference>
<dbReference type="InterPro" id="IPR043129">
    <property type="entry name" value="ATPase_NBD"/>
</dbReference>
<dbReference type="InterPro" id="IPR000577">
    <property type="entry name" value="Carb_kinase_FGGY"/>
</dbReference>
<dbReference type="InterPro" id="IPR018483">
    <property type="entry name" value="Carb_kinase_FGGY_CS"/>
</dbReference>
<dbReference type="InterPro" id="IPR018485">
    <property type="entry name" value="FGGY_C"/>
</dbReference>
<dbReference type="InterPro" id="IPR018484">
    <property type="entry name" value="FGGY_N"/>
</dbReference>
<dbReference type="InterPro" id="IPR005999">
    <property type="entry name" value="Glycerol_kin"/>
</dbReference>
<dbReference type="NCBIfam" id="TIGR01311">
    <property type="entry name" value="glycerol_kin"/>
    <property type="match status" value="1"/>
</dbReference>
<dbReference type="NCBIfam" id="NF000756">
    <property type="entry name" value="PRK00047.1"/>
    <property type="match status" value="1"/>
</dbReference>
<dbReference type="PANTHER" id="PTHR10196:SF69">
    <property type="entry name" value="GLYCEROL KINASE"/>
    <property type="match status" value="1"/>
</dbReference>
<dbReference type="PANTHER" id="PTHR10196">
    <property type="entry name" value="SUGAR KINASE"/>
    <property type="match status" value="1"/>
</dbReference>
<dbReference type="Pfam" id="PF02782">
    <property type="entry name" value="FGGY_C"/>
    <property type="match status" value="1"/>
</dbReference>
<dbReference type="Pfam" id="PF00370">
    <property type="entry name" value="FGGY_N"/>
    <property type="match status" value="1"/>
</dbReference>
<dbReference type="PIRSF" id="PIRSF000538">
    <property type="entry name" value="GlpK"/>
    <property type="match status" value="1"/>
</dbReference>
<dbReference type="SUPFAM" id="SSF53067">
    <property type="entry name" value="Actin-like ATPase domain"/>
    <property type="match status" value="2"/>
</dbReference>
<dbReference type="PROSITE" id="PS00445">
    <property type="entry name" value="FGGY_KINASES_2"/>
    <property type="match status" value="1"/>
</dbReference>